<proteinExistence type="inferred from homology"/>
<dbReference type="EC" id="3.6.1.23" evidence="1"/>
<dbReference type="EMBL" id="CP000437">
    <property type="protein sequence ID" value="ABI82251.1"/>
    <property type="molecule type" value="Genomic_DNA"/>
</dbReference>
<dbReference type="RefSeq" id="WP_003014311.1">
    <property type="nucleotide sequence ID" value="NC_017463.1"/>
</dbReference>
<dbReference type="SMR" id="Q0BNT3"/>
<dbReference type="KEGG" id="fth:FTH_0225"/>
<dbReference type="UniPathway" id="UPA00610">
    <property type="reaction ID" value="UER00666"/>
</dbReference>
<dbReference type="GO" id="GO:0004170">
    <property type="term" value="F:dUTP diphosphatase activity"/>
    <property type="evidence" value="ECO:0007669"/>
    <property type="project" value="UniProtKB-UniRule"/>
</dbReference>
<dbReference type="GO" id="GO:0000287">
    <property type="term" value="F:magnesium ion binding"/>
    <property type="evidence" value="ECO:0007669"/>
    <property type="project" value="UniProtKB-UniRule"/>
</dbReference>
<dbReference type="GO" id="GO:0006226">
    <property type="term" value="P:dUMP biosynthetic process"/>
    <property type="evidence" value="ECO:0007669"/>
    <property type="project" value="UniProtKB-UniRule"/>
</dbReference>
<dbReference type="GO" id="GO:0046081">
    <property type="term" value="P:dUTP catabolic process"/>
    <property type="evidence" value="ECO:0007669"/>
    <property type="project" value="InterPro"/>
</dbReference>
<dbReference type="CDD" id="cd07557">
    <property type="entry name" value="trimeric_dUTPase"/>
    <property type="match status" value="1"/>
</dbReference>
<dbReference type="FunFam" id="2.70.40.10:FF:000002">
    <property type="entry name" value="dUTP diphosphatase"/>
    <property type="match status" value="1"/>
</dbReference>
<dbReference type="Gene3D" id="2.70.40.10">
    <property type="match status" value="1"/>
</dbReference>
<dbReference type="HAMAP" id="MF_00116">
    <property type="entry name" value="dUTPase_bact"/>
    <property type="match status" value="1"/>
</dbReference>
<dbReference type="InterPro" id="IPR008181">
    <property type="entry name" value="dUTPase"/>
</dbReference>
<dbReference type="InterPro" id="IPR029054">
    <property type="entry name" value="dUTPase-like"/>
</dbReference>
<dbReference type="InterPro" id="IPR036157">
    <property type="entry name" value="dUTPase-like_sf"/>
</dbReference>
<dbReference type="InterPro" id="IPR033704">
    <property type="entry name" value="dUTPase_trimeric"/>
</dbReference>
<dbReference type="NCBIfam" id="TIGR00576">
    <property type="entry name" value="dut"/>
    <property type="match status" value="1"/>
</dbReference>
<dbReference type="NCBIfam" id="NF001862">
    <property type="entry name" value="PRK00601.1"/>
    <property type="match status" value="1"/>
</dbReference>
<dbReference type="PANTHER" id="PTHR11241">
    <property type="entry name" value="DEOXYURIDINE 5'-TRIPHOSPHATE NUCLEOTIDOHYDROLASE"/>
    <property type="match status" value="1"/>
</dbReference>
<dbReference type="PANTHER" id="PTHR11241:SF0">
    <property type="entry name" value="DEOXYURIDINE 5'-TRIPHOSPHATE NUCLEOTIDOHYDROLASE"/>
    <property type="match status" value="1"/>
</dbReference>
<dbReference type="Pfam" id="PF00692">
    <property type="entry name" value="dUTPase"/>
    <property type="match status" value="1"/>
</dbReference>
<dbReference type="SUPFAM" id="SSF51283">
    <property type="entry name" value="dUTPase-like"/>
    <property type="match status" value="1"/>
</dbReference>
<sequence>MKVELKILNKELIKELPGYATEGSAAIDLRACISESIYLKSGECKLIATGIAINIANPNYAAMILPRSGLGHKKGLVLGNGTGLIDSDYQGELMVSCFNRSQETIEIEPLMRFAQLVIVPVVQANFEIVEDFSQQSVRATGGFGHTGV</sequence>
<comment type="function">
    <text evidence="1">This enzyme is involved in nucleotide metabolism: it produces dUMP, the immediate precursor of thymidine nucleotides and it decreases the intracellular concentration of dUTP so that uracil cannot be incorporated into DNA.</text>
</comment>
<comment type="catalytic activity">
    <reaction evidence="1">
        <text>dUTP + H2O = dUMP + diphosphate + H(+)</text>
        <dbReference type="Rhea" id="RHEA:10248"/>
        <dbReference type="ChEBI" id="CHEBI:15377"/>
        <dbReference type="ChEBI" id="CHEBI:15378"/>
        <dbReference type="ChEBI" id="CHEBI:33019"/>
        <dbReference type="ChEBI" id="CHEBI:61555"/>
        <dbReference type="ChEBI" id="CHEBI:246422"/>
        <dbReference type="EC" id="3.6.1.23"/>
    </reaction>
</comment>
<comment type="cofactor">
    <cofactor evidence="1">
        <name>Mg(2+)</name>
        <dbReference type="ChEBI" id="CHEBI:18420"/>
    </cofactor>
</comment>
<comment type="pathway">
    <text evidence="1">Pyrimidine metabolism; dUMP biosynthesis; dUMP from dCTP (dUTP route): step 2/2.</text>
</comment>
<comment type="similarity">
    <text evidence="1">Belongs to the dUTPase family.</text>
</comment>
<feature type="chain" id="PRO_1000015471" description="Deoxyuridine 5'-triphosphate nucleotidohydrolase">
    <location>
        <begin position="1"/>
        <end position="148"/>
    </location>
</feature>
<feature type="binding site" evidence="1">
    <location>
        <begin position="67"/>
        <end position="69"/>
    </location>
    <ligand>
        <name>substrate</name>
    </ligand>
</feature>
<feature type="binding site" evidence="1">
    <location>
        <position position="80"/>
    </location>
    <ligand>
        <name>substrate</name>
    </ligand>
</feature>
<feature type="binding site" evidence="1">
    <location>
        <begin position="84"/>
        <end position="86"/>
    </location>
    <ligand>
        <name>substrate</name>
    </ligand>
</feature>
<feature type="binding site" evidence="1">
    <location>
        <position position="94"/>
    </location>
    <ligand>
        <name>substrate</name>
    </ligand>
</feature>
<accession>Q0BNT3</accession>
<protein>
    <recommendedName>
        <fullName evidence="1">Deoxyuridine 5'-triphosphate nucleotidohydrolase</fullName>
        <shortName evidence="1">dUTPase</shortName>
        <ecNumber evidence="1">3.6.1.23</ecNumber>
    </recommendedName>
    <alternativeName>
        <fullName evidence="1">dUTP pyrophosphatase</fullName>
    </alternativeName>
</protein>
<evidence type="ECO:0000255" key="1">
    <source>
        <dbReference type="HAMAP-Rule" id="MF_00116"/>
    </source>
</evidence>
<reference key="1">
    <citation type="journal article" date="2006" name="J. Bacteriol.">
        <title>Chromosome rearrangement and diversification of Francisella tularensis revealed by the type B (OSU18) genome sequence.</title>
        <authorList>
            <person name="Petrosino J.F."/>
            <person name="Xiang Q."/>
            <person name="Karpathy S.E."/>
            <person name="Jiang H."/>
            <person name="Yerrapragada S."/>
            <person name="Liu Y."/>
            <person name="Gioia J."/>
            <person name="Hemphill L."/>
            <person name="Gonzalez A."/>
            <person name="Raghavan T.M."/>
            <person name="Uzman A."/>
            <person name="Fox G.E."/>
            <person name="Highlander S."/>
            <person name="Reichard M."/>
            <person name="Morton R.J."/>
            <person name="Clinkenbeard K.D."/>
            <person name="Weinstock G.M."/>
        </authorList>
    </citation>
    <scope>NUCLEOTIDE SEQUENCE [LARGE SCALE GENOMIC DNA]</scope>
    <source>
        <strain>OSU18</strain>
    </source>
</reference>
<name>DUT_FRATO</name>
<gene>
    <name evidence="1" type="primary">dut</name>
    <name type="ordered locus">FTH_0225</name>
</gene>
<organism>
    <name type="scientific">Francisella tularensis subsp. holarctica (strain OSU18)</name>
    <dbReference type="NCBI Taxonomy" id="393011"/>
    <lineage>
        <taxon>Bacteria</taxon>
        <taxon>Pseudomonadati</taxon>
        <taxon>Pseudomonadota</taxon>
        <taxon>Gammaproteobacteria</taxon>
        <taxon>Thiotrichales</taxon>
        <taxon>Francisellaceae</taxon>
        <taxon>Francisella</taxon>
    </lineage>
</organism>
<keyword id="KW-0378">Hydrolase</keyword>
<keyword id="KW-0460">Magnesium</keyword>
<keyword id="KW-0479">Metal-binding</keyword>
<keyword id="KW-0546">Nucleotide metabolism</keyword>